<dbReference type="EC" id="2.1.1.181" evidence="1"/>
<dbReference type="EMBL" id="CP000681">
    <property type="protein sequence ID" value="ABP73864.1"/>
    <property type="molecule type" value="Genomic_DNA"/>
</dbReference>
<dbReference type="SMR" id="A4Y1N1"/>
<dbReference type="STRING" id="319224.Sputcn32_0128"/>
<dbReference type="KEGG" id="spc:Sputcn32_0128"/>
<dbReference type="eggNOG" id="COG3129">
    <property type="taxonomic scope" value="Bacteria"/>
</dbReference>
<dbReference type="HOGENOM" id="CLU_027534_3_0_6"/>
<dbReference type="GO" id="GO:0005737">
    <property type="term" value="C:cytoplasm"/>
    <property type="evidence" value="ECO:0007669"/>
    <property type="project" value="UniProtKB-SubCell"/>
</dbReference>
<dbReference type="GO" id="GO:0052907">
    <property type="term" value="F:23S rRNA (adenine(1618)-N(6))-methyltransferase activity"/>
    <property type="evidence" value="ECO:0007669"/>
    <property type="project" value="UniProtKB-EC"/>
</dbReference>
<dbReference type="GO" id="GO:0070475">
    <property type="term" value="P:rRNA base methylation"/>
    <property type="evidence" value="ECO:0007669"/>
    <property type="project" value="TreeGrafter"/>
</dbReference>
<dbReference type="CDD" id="cd02440">
    <property type="entry name" value="AdoMet_MTases"/>
    <property type="match status" value="1"/>
</dbReference>
<dbReference type="Gene3D" id="3.40.50.150">
    <property type="entry name" value="Vaccinia Virus protein VP39"/>
    <property type="match status" value="1"/>
</dbReference>
<dbReference type="HAMAP" id="MF_01848">
    <property type="entry name" value="23SrRNA_methyltr_F"/>
    <property type="match status" value="1"/>
</dbReference>
<dbReference type="InterPro" id="IPR010286">
    <property type="entry name" value="METTL16/RlmF"/>
</dbReference>
<dbReference type="InterPro" id="IPR016909">
    <property type="entry name" value="rRNA_lsu_MeTfrase_F"/>
</dbReference>
<dbReference type="InterPro" id="IPR029063">
    <property type="entry name" value="SAM-dependent_MTases_sf"/>
</dbReference>
<dbReference type="NCBIfam" id="NF008725">
    <property type="entry name" value="PRK11727.1"/>
    <property type="match status" value="1"/>
</dbReference>
<dbReference type="PANTHER" id="PTHR13393:SF0">
    <property type="entry name" value="RNA N6-ADENOSINE-METHYLTRANSFERASE METTL16"/>
    <property type="match status" value="1"/>
</dbReference>
<dbReference type="PANTHER" id="PTHR13393">
    <property type="entry name" value="SAM-DEPENDENT METHYLTRANSFERASE"/>
    <property type="match status" value="1"/>
</dbReference>
<dbReference type="Pfam" id="PF05971">
    <property type="entry name" value="Methyltransf_10"/>
    <property type="match status" value="1"/>
</dbReference>
<dbReference type="PIRSF" id="PIRSF029038">
    <property type="entry name" value="Mtase_YbiN_prd"/>
    <property type="match status" value="1"/>
</dbReference>
<dbReference type="SUPFAM" id="SSF53335">
    <property type="entry name" value="S-adenosyl-L-methionine-dependent methyltransferases"/>
    <property type="match status" value="1"/>
</dbReference>
<comment type="function">
    <text evidence="1">Specifically methylates the adenine in position 1618 of 23S rRNA.</text>
</comment>
<comment type="catalytic activity">
    <reaction evidence="1">
        <text>adenosine(1618) in 23S rRNA + S-adenosyl-L-methionine = N(6)-methyladenosine(1618) in 23S rRNA + S-adenosyl-L-homocysteine + H(+)</text>
        <dbReference type="Rhea" id="RHEA:16497"/>
        <dbReference type="Rhea" id="RHEA-COMP:10229"/>
        <dbReference type="Rhea" id="RHEA-COMP:10231"/>
        <dbReference type="ChEBI" id="CHEBI:15378"/>
        <dbReference type="ChEBI" id="CHEBI:57856"/>
        <dbReference type="ChEBI" id="CHEBI:59789"/>
        <dbReference type="ChEBI" id="CHEBI:74411"/>
        <dbReference type="ChEBI" id="CHEBI:74449"/>
        <dbReference type="EC" id="2.1.1.181"/>
    </reaction>
</comment>
<comment type="subcellular location">
    <subcellularLocation>
        <location evidence="1">Cytoplasm</location>
    </subcellularLocation>
</comment>
<comment type="similarity">
    <text evidence="1">Belongs to the methyltransferase superfamily. METTL16/RlmF family.</text>
</comment>
<reference key="1">
    <citation type="submission" date="2007-04" db="EMBL/GenBank/DDBJ databases">
        <title>Complete sequence of Shewanella putrefaciens CN-32.</title>
        <authorList>
            <consortium name="US DOE Joint Genome Institute"/>
            <person name="Copeland A."/>
            <person name="Lucas S."/>
            <person name="Lapidus A."/>
            <person name="Barry K."/>
            <person name="Detter J.C."/>
            <person name="Glavina del Rio T."/>
            <person name="Hammon N."/>
            <person name="Israni S."/>
            <person name="Dalin E."/>
            <person name="Tice H."/>
            <person name="Pitluck S."/>
            <person name="Chain P."/>
            <person name="Malfatti S."/>
            <person name="Shin M."/>
            <person name="Vergez L."/>
            <person name="Schmutz J."/>
            <person name="Larimer F."/>
            <person name="Land M."/>
            <person name="Hauser L."/>
            <person name="Kyrpides N."/>
            <person name="Mikhailova N."/>
            <person name="Romine M.F."/>
            <person name="Fredrickson J."/>
            <person name="Tiedje J."/>
            <person name="Richardson P."/>
        </authorList>
    </citation>
    <scope>NUCLEOTIDE SEQUENCE [LARGE SCALE GENOMIC DNA]</scope>
    <source>
        <strain>CN-32 / ATCC BAA-453</strain>
    </source>
</reference>
<evidence type="ECO:0000255" key="1">
    <source>
        <dbReference type="HAMAP-Rule" id="MF_01848"/>
    </source>
</evidence>
<evidence type="ECO:0000256" key="2">
    <source>
        <dbReference type="SAM" id="MobiDB-lite"/>
    </source>
</evidence>
<accession>A4Y1N1</accession>
<protein>
    <recommendedName>
        <fullName evidence="1">Ribosomal RNA large subunit methyltransferase F</fullName>
        <ecNumber evidence="1">2.1.1.181</ecNumber>
    </recommendedName>
    <alternativeName>
        <fullName evidence="1">23S rRNA mA1618 methyltransferase</fullName>
    </alternativeName>
    <alternativeName>
        <fullName evidence="1">rRNA adenine N-6-methyltransferase</fullName>
    </alternativeName>
</protein>
<proteinExistence type="inferred from homology"/>
<organism>
    <name type="scientific">Shewanella putrefaciens (strain CN-32 / ATCC BAA-453)</name>
    <dbReference type="NCBI Taxonomy" id="319224"/>
    <lineage>
        <taxon>Bacteria</taxon>
        <taxon>Pseudomonadati</taxon>
        <taxon>Pseudomonadota</taxon>
        <taxon>Gammaproteobacteria</taxon>
        <taxon>Alteromonadales</taxon>
        <taxon>Shewanellaceae</taxon>
        <taxon>Shewanella</taxon>
    </lineage>
</organism>
<name>RLMF_SHEPC</name>
<feature type="chain" id="PRO_0000349960" description="Ribosomal RNA large subunit methyltransferase F">
    <location>
        <begin position="1"/>
        <end position="357"/>
    </location>
</feature>
<feature type="region of interest" description="Disordered" evidence="2">
    <location>
        <begin position="1"/>
        <end position="33"/>
    </location>
</feature>
<feature type="compositionally biased region" description="Polar residues" evidence="2">
    <location>
        <begin position="1"/>
        <end position="15"/>
    </location>
</feature>
<gene>
    <name evidence="1" type="primary">rlmF</name>
    <name type="ordered locus">Sputcn32_0128</name>
</gene>
<sequence length="357" mass="39438">MPKPPRSTQILSCNAPNGKPKTQHPSARAKVKRTPVNTRSIAEIKKALHPRNVHINGYDFNALIKAFPRLNAFVRPTSFGGLSIDFADPEAVKTLNTALLKHHYGIDFWDIPKGALCPPIPGRVDYLHYLADLLAEGDHHLVMDRVSVLDIGTGANGIYPILGCQVFGWHFVASDINSISLANVQGIIAQNPALHGRLNLRLQGDESAIFKGVIQPQERFELTLCNPPFHASLAEAAEGSLRKVRNLQLNRGRTAKPVAKLNFGGQGAELWCQGGEPQFLATMIDESQAFADQCLWFTSLVSKKENLKPCYQALAKLAVDTVKTIEMQQGNKMTRILAWSFQSAAKRKIWRNAHLSD</sequence>
<keyword id="KW-0963">Cytoplasm</keyword>
<keyword id="KW-0489">Methyltransferase</keyword>
<keyword id="KW-0698">rRNA processing</keyword>
<keyword id="KW-0949">S-adenosyl-L-methionine</keyword>
<keyword id="KW-0808">Transferase</keyword>